<protein>
    <recommendedName>
        <fullName>Ras-related protein Rab-10</fullName>
        <ecNumber evidence="4">3.6.5.2</ecNumber>
    </recommendedName>
</protein>
<organism>
    <name type="scientific">Mus musculus</name>
    <name type="common">Mouse</name>
    <dbReference type="NCBI Taxonomy" id="10090"/>
    <lineage>
        <taxon>Eukaryota</taxon>
        <taxon>Metazoa</taxon>
        <taxon>Chordata</taxon>
        <taxon>Craniata</taxon>
        <taxon>Vertebrata</taxon>
        <taxon>Euteleostomi</taxon>
        <taxon>Mammalia</taxon>
        <taxon>Eutheria</taxon>
        <taxon>Euarchontoglires</taxon>
        <taxon>Glires</taxon>
        <taxon>Rodentia</taxon>
        <taxon>Myomorpha</taxon>
        <taxon>Muroidea</taxon>
        <taxon>Muridae</taxon>
        <taxon>Murinae</taxon>
        <taxon>Mus</taxon>
        <taxon>Mus</taxon>
    </lineage>
</organism>
<evidence type="ECO:0000250" key="1"/>
<evidence type="ECO:0000250" key="2">
    <source>
        <dbReference type="UniProtKB" id="P24409"/>
    </source>
</evidence>
<evidence type="ECO:0000250" key="3">
    <source>
        <dbReference type="UniProtKB" id="P35281"/>
    </source>
</evidence>
<evidence type="ECO:0000250" key="4">
    <source>
        <dbReference type="UniProtKB" id="P61026"/>
    </source>
</evidence>
<evidence type="ECO:0000250" key="5">
    <source>
        <dbReference type="UniProtKB" id="P62820"/>
    </source>
</evidence>
<evidence type="ECO:0000269" key="6">
    <source>
    </source>
</evidence>
<evidence type="ECO:0000269" key="7">
    <source>
    </source>
</evidence>
<evidence type="ECO:0000269" key="8">
    <source>
    </source>
</evidence>
<evidence type="ECO:0000269" key="9">
    <source>
    </source>
</evidence>
<evidence type="ECO:0000269" key="10">
    <source>
    </source>
</evidence>
<evidence type="ECO:0000269" key="11">
    <source>
    </source>
</evidence>
<evidence type="ECO:0000269" key="12">
    <source>
    </source>
</evidence>
<evidence type="ECO:0000269" key="13">
    <source>
    </source>
</evidence>
<evidence type="ECO:0000269" key="14">
    <source>
    </source>
</evidence>
<evidence type="ECO:0000269" key="15">
    <source>
    </source>
</evidence>
<evidence type="ECO:0000269" key="16">
    <source>
    </source>
</evidence>
<evidence type="ECO:0000269" key="17">
    <source>
    </source>
</evidence>
<evidence type="ECO:0000305" key="18"/>
<evidence type="ECO:0000305" key="19">
    <source>
    </source>
</evidence>
<evidence type="ECO:0000312" key="20">
    <source>
        <dbReference type="MGI" id="MGI:105066"/>
    </source>
</evidence>
<comment type="function">
    <text evidence="2 3 4 6 9 12 14 16">The small GTPases Rab are key regulators of intracellular membrane trafficking, from the formation of transport vesicles to their fusion with membranes (By similarity). Rabs cycle between an inactive GDP-bound form and an active GTP-bound form that is able to recruit to membranes different set of downstream effectors directly responsible for vesicle formation, movement, tethering and fusion (By similarity). That Rab is mainly involved in the biosynthetic transport of proteins from the Golgi to the plasma membrane (By similarity). Regulates, for instance, SLC2A4/GLUT4 glucose transporter-enriched vesicles delivery to the plasma membrane (PubMed:17403373, PubMed:22908308, PubMed:27354378). In parallel, it regulates the transport of TLR4, a toll-like receptor to the plasma membrane and therefore may be important for innate immune response (PubMed:20643919). Also plays a specific role in asymmetric protein transport to the plasma membrane (By similarity). In neurons, it is involved in axonogenesis through regulation of vesicular membrane trafficking toward the axonal plasma membrane (By similarity). In epithelial cells, it regulates transport from the Golgi to the basolateral membrane (By similarity). May play a role in the basolateral recycling pathway and in phagosome maturation (By similarity). May play a role in endoplasmic reticulum dynamics and morphology controlling tubulation along microtubules and tubules fusion (By similarity). Together with LRRK2, RAB8A, and RILPL1, it regulates ciliogenesis (By similarity). When phosphorylated by LRRK2 on Thr-73, it binds RILPL1 and inhibits ciliogenesis (By similarity). Participates in the export of a subset of neosynthesized proteins through a Rab8-Rab10-Rab11-dependent endososomal export route (By similarity). Targeted to and stabilized on stressed lysosomes through LRRK2 phosphorylation where it promotes the extracellular release of lysosomal content through EHBP1 and EHNP1L1 effector proteins (PubMed:30209220).</text>
</comment>
<comment type="catalytic activity">
    <reaction evidence="4">
        <text>GTP + H2O = GDP + phosphate + H(+)</text>
        <dbReference type="Rhea" id="RHEA:19669"/>
        <dbReference type="ChEBI" id="CHEBI:15377"/>
        <dbReference type="ChEBI" id="CHEBI:15378"/>
        <dbReference type="ChEBI" id="CHEBI:37565"/>
        <dbReference type="ChEBI" id="CHEBI:43474"/>
        <dbReference type="ChEBI" id="CHEBI:58189"/>
        <dbReference type="EC" id="3.6.5.2"/>
    </reaction>
    <physiologicalReaction direction="left-to-right" evidence="4">
        <dbReference type="Rhea" id="RHEA:19670"/>
    </physiologicalReaction>
</comment>
<comment type="cofactor">
    <cofactor evidence="4">
        <name>Mg(2+)</name>
        <dbReference type="ChEBI" id="CHEBI:18420"/>
    </cofactor>
</comment>
<comment type="activity regulation">
    <text evidence="4 10">Regulated by guanine nucleotide exchange factors (GEFs) DENND4C and RABIF which promote the exchange of bound GDP for free GTP (PubMed:21454697). Regulated by GTPase activating proteins (GAPs) including TBC1D21 which increase the GTP hydrolysis activity. Inhibited by GDP dissociation inhibitors GDI1 and GDI2 which prevent Rab-GDP dissociation (By similarity).</text>
</comment>
<comment type="subunit">
    <text evidence="2 3 4 7 11 12 14">Interacts with MYO5A; mediates the transport to the plasma membrane of SLC2A4/GLUT4 storage vesicles (PubMed:22908308). Interacts with GDI1; negatively regulates RAB10 association with membranes and activation (PubMed:19570034). Interacts (GDP-bound form) with LLGL1; the interaction is direct and promotes RAB10 association with membranes and activation through competition with the Rab inhibitor GDI1 (By similarity). Interacts with EXOC4; probably associates with the exocyst (By similarity). Interacts (GTP-bound form) with MICALCL, MICAL1, MICAL3, EHBP1 and EHBP1L1; at least in case of MICAL1 two molecules of RAB10 can bind to one molecule of MICAL1 (By similarity). Interacts with TBC1D13 (PubMed:22762500). Interacts with SEC16A (PubMed:27354378). Interacts with GDI2, CHM and CHML (By similarity). Interacts with LRRK2; interaction facilitates phosphorylation of Thr-73 (By similarity). Interacts with RILPL1 and RILPL2 when phosphorylated on Thr-73 (By similarity). Interacts with TBC1D21 (By similarity). Interacts with MARCKS (By similarity).</text>
</comment>
<comment type="interaction">
    <interactant intactId="EBI-911581">
        <id>P61027</id>
    </interactant>
    <interactant intactId="EBI-946999">
        <id>P31150</id>
        <label>GDI1</label>
    </interactant>
    <organismsDiffer>true</organismsDiffer>
    <experiments>3</experiments>
</comment>
<comment type="interaction">
    <interactant intactId="EBI-911581">
        <id>P61027</id>
    </interactant>
    <interactant intactId="EBI-1049143">
        <id>P50395</id>
        <label>GDI2</label>
    </interactant>
    <organismsDiffer>true</organismsDiffer>
    <experiments>3</experiments>
</comment>
<comment type="subcellular location">
    <subcellularLocation>
        <location evidence="18">Cytoplasmic vesicle membrane</location>
        <topology evidence="19">Lipid-anchor</topology>
        <orientation evidence="19">Cytoplasmic side</orientation>
    </subcellularLocation>
    <subcellularLocation>
        <location evidence="2">Golgi apparatus</location>
        <location evidence="2">trans-Golgi network membrane</location>
    </subcellularLocation>
    <subcellularLocation>
        <location evidence="4">Endosome membrane</location>
    </subcellularLocation>
    <subcellularLocation>
        <location evidence="2">Recycling endosome membrane</location>
    </subcellularLocation>
    <subcellularLocation>
        <location evidence="2">Cytoplasmic vesicle</location>
        <location evidence="2">Phagosome membrane</location>
    </subcellularLocation>
    <subcellularLocation>
        <location evidence="8 17">Cytoplasm</location>
        <location evidence="8 17">Cytoskeleton</location>
        <location evidence="8 17">Cilium basal body</location>
    </subcellularLocation>
    <subcellularLocation>
        <location evidence="8">Endoplasmic reticulum membrane</location>
    </subcellularLocation>
    <subcellularLocation>
        <location evidence="14">Cytoplasm</location>
        <location evidence="14">Perinuclear region</location>
    </subcellularLocation>
    <subcellularLocation>
        <location evidence="16">Lysosome</location>
    </subcellularLocation>
    <text evidence="2 4 8 14 16">Associates with SLC2A4/GLUT4 storage vesicles (PubMed:27354378). Localizes to the base of the cilium when phosphorylated by LRRK2 on Thr-73 (PubMed:20576682, PubMed:27354378). Transiently associates with phagosomes (By similarity). Localizes to the endoplasmic reticulum at domains of new tubule growth (By similarity). Localizes to enlarged lysosomes through LRRK2 phosphorylation (PubMed:30209220).</text>
</comment>
<comment type="tissue specificity">
    <text evidence="17">Expressed in the brain, specifically neurons (at protein level).</text>
</comment>
<comment type="induction">
    <text evidence="9">Up-regulated by LPS.</text>
</comment>
<comment type="domain">
    <text evidence="5">Switch 1, switch 2 and the interswitch regions are characteristic of Rab GTPases and mediate the interactions with Rab downstream effectors. The switch regions undergo conformational changes upon nucleotide binding which drives interaction with specific sets of effector proteins, with most effectors only binding to GTP-bound Rab.</text>
</comment>
<comment type="PTM">
    <text evidence="4 16">Phosphorylation of Thr-73 in the switch II region by LRRK2 prevents the association of RAB regulatory proteins, including CHM, CHML and RAB GDP dissociation inhibitors GDI1 and GDI2 (By similarity). Phosphorylation of Thr-73 by LRRK2 is stimulated by RAB29 and RAB32 (By similarity). Phosphorylation by LRRK2 is required for localization to stressed lysosomes (PubMed:30209220).</text>
</comment>
<comment type="similarity">
    <text evidence="18">Belongs to the small GTPase superfamily. Rab family.</text>
</comment>
<name>RAB10_MOUSE</name>
<accession>P61027</accession>
<accession>O88386</accession>
<accession>Q9D7X6</accession>
<reference key="1">
    <citation type="submission" date="1997-11" db="EMBL/GenBank/DDBJ databases">
        <authorList>
            <person name="Zeng Q."/>
            <person name="Tan Y.H."/>
            <person name="Hong W."/>
        </authorList>
    </citation>
    <scope>NUCLEOTIDE SEQUENCE [MRNA]</scope>
</reference>
<reference key="2">
    <citation type="journal article" date="2005" name="Science">
        <title>The transcriptional landscape of the mammalian genome.</title>
        <authorList>
            <person name="Carninci P."/>
            <person name="Kasukawa T."/>
            <person name="Katayama S."/>
            <person name="Gough J."/>
            <person name="Frith M.C."/>
            <person name="Maeda N."/>
            <person name="Oyama R."/>
            <person name="Ravasi T."/>
            <person name="Lenhard B."/>
            <person name="Wells C."/>
            <person name="Kodzius R."/>
            <person name="Shimokawa K."/>
            <person name="Bajic V.B."/>
            <person name="Brenner S.E."/>
            <person name="Batalov S."/>
            <person name="Forrest A.R."/>
            <person name="Zavolan M."/>
            <person name="Davis M.J."/>
            <person name="Wilming L.G."/>
            <person name="Aidinis V."/>
            <person name="Allen J.E."/>
            <person name="Ambesi-Impiombato A."/>
            <person name="Apweiler R."/>
            <person name="Aturaliya R.N."/>
            <person name="Bailey T.L."/>
            <person name="Bansal M."/>
            <person name="Baxter L."/>
            <person name="Beisel K.W."/>
            <person name="Bersano T."/>
            <person name="Bono H."/>
            <person name="Chalk A.M."/>
            <person name="Chiu K.P."/>
            <person name="Choudhary V."/>
            <person name="Christoffels A."/>
            <person name="Clutterbuck D.R."/>
            <person name="Crowe M.L."/>
            <person name="Dalla E."/>
            <person name="Dalrymple B.P."/>
            <person name="de Bono B."/>
            <person name="Della Gatta G."/>
            <person name="di Bernardo D."/>
            <person name="Down T."/>
            <person name="Engstrom P."/>
            <person name="Fagiolini M."/>
            <person name="Faulkner G."/>
            <person name="Fletcher C.F."/>
            <person name="Fukushima T."/>
            <person name="Furuno M."/>
            <person name="Futaki S."/>
            <person name="Gariboldi M."/>
            <person name="Georgii-Hemming P."/>
            <person name="Gingeras T.R."/>
            <person name="Gojobori T."/>
            <person name="Green R.E."/>
            <person name="Gustincich S."/>
            <person name="Harbers M."/>
            <person name="Hayashi Y."/>
            <person name="Hensch T.K."/>
            <person name="Hirokawa N."/>
            <person name="Hill D."/>
            <person name="Huminiecki L."/>
            <person name="Iacono M."/>
            <person name="Ikeo K."/>
            <person name="Iwama A."/>
            <person name="Ishikawa T."/>
            <person name="Jakt M."/>
            <person name="Kanapin A."/>
            <person name="Katoh M."/>
            <person name="Kawasawa Y."/>
            <person name="Kelso J."/>
            <person name="Kitamura H."/>
            <person name="Kitano H."/>
            <person name="Kollias G."/>
            <person name="Krishnan S.P."/>
            <person name="Kruger A."/>
            <person name="Kummerfeld S.K."/>
            <person name="Kurochkin I.V."/>
            <person name="Lareau L.F."/>
            <person name="Lazarevic D."/>
            <person name="Lipovich L."/>
            <person name="Liu J."/>
            <person name="Liuni S."/>
            <person name="McWilliam S."/>
            <person name="Madan Babu M."/>
            <person name="Madera M."/>
            <person name="Marchionni L."/>
            <person name="Matsuda H."/>
            <person name="Matsuzawa S."/>
            <person name="Miki H."/>
            <person name="Mignone F."/>
            <person name="Miyake S."/>
            <person name="Morris K."/>
            <person name="Mottagui-Tabar S."/>
            <person name="Mulder N."/>
            <person name="Nakano N."/>
            <person name="Nakauchi H."/>
            <person name="Ng P."/>
            <person name="Nilsson R."/>
            <person name="Nishiguchi S."/>
            <person name="Nishikawa S."/>
            <person name="Nori F."/>
            <person name="Ohara O."/>
            <person name="Okazaki Y."/>
            <person name="Orlando V."/>
            <person name="Pang K.C."/>
            <person name="Pavan W.J."/>
            <person name="Pavesi G."/>
            <person name="Pesole G."/>
            <person name="Petrovsky N."/>
            <person name="Piazza S."/>
            <person name="Reed J."/>
            <person name="Reid J.F."/>
            <person name="Ring B.Z."/>
            <person name="Ringwald M."/>
            <person name="Rost B."/>
            <person name="Ruan Y."/>
            <person name="Salzberg S.L."/>
            <person name="Sandelin A."/>
            <person name="Schneider C."/>
            <person name="Schoenbach C."/>
            <person name="Sekiguchi K."/>
            <person name="Semple C.A."/>
            <person name="Seno S."/>
            <person name="Sessa L."/>
            <person name="Sheng Y."/>
            <person name="Shibata Y."/>
            <person name="Shimada H."/>
            <person name="Shimada K."/>
            <person name="Silva D."/>
            <person name="Sinclair B."/>
            <person name="Sperling S."/>
            <person name="Stupka E."/>
            <person name="Sugiura K."/>
            <person name="Sultana R."/>
            <person name="Takenaka Y."/>
            <person name="Taki K."/>
            <person name="Tammoja K."/>
            <person name="Tan S.L."/>
            <person name="Tang S."/>
            <person name="Taylor M.S."/>
            <person name="Tegner J."/>
            <person name="Teichmann S.A."/>
            <person name="Ueda H.R."/>
            <person name="van Nimwegen E."/>
            <person name="Verardo R."/>
            <person name="Wei C.L."/>
            <person name="Yagi K."/>
            <person name="Yamanishi H."/>
            <person name="Zabarovsky E."/>
            <person name="Zhu S."/>
            <person name="Zimmer A."/>
            <person name="Hide W."/>
            <person name="Bult C."/>
            <person name="Grimmond S.M."/>
            <person name="Teasdale R.D."/>
            <person name="Liu E.T."/>
            <person name="Brusic V."/>
            <person name="Quackenbush J."/>
            <person name="Wahlestedt C."/>
            <person name="Mattick J.S."/>
            <person name="Hume D.A."/>
            <person name="Kai C."/>
            <person name="Sasaki D."/>
            <person name="Tomaru Y."/>
            <person name="Fukuda S."/>
            <person name="Kanamori-Katayama M."/>
            <person name="Suzuki M."/>
            <person name="Aoki J."/>
            <person name="Arakawa T."/>
            <person name="Iida J."/>
            <person name="Imamura K."/>
            <person name="Itoh M."/>
            <person name="Kato T."/>
            <person name="Kawaji H."/>
            <person name="Kawagashira N."/>
            <person name="Kawashima T."/>
            <person name="Kojima M."/>
            <person name="Kondo S."/>
            <person name="Konno H."/>
            <person name="Nakano K."/>
            <person name="Ninomiya N."/>
            <person name="Nishio T."/>
            <person name="Okada M."/>
            <person name="Plessy C."/>
            <person name="Shibata K."/>
            <person name="Shiraki T."/>
            <person name="Suzuki S."/>
            <person name="Tagami M."/>
            <person name="Waki K."/>
            <person name="Watahiki A."/>
            <person name="Okamura-Oho Y."/>
            <person name="Suzuki H."/>
            <person name="Kawai J."/>
            <person name="Hayashizaki Y."/>
        </authorList>
    </citation>
    <scope>NUCLEOTIDE SEQUENCE [LARGE SCALE MRNA]</scope>
    <source>
        <strain>C57BL/6J</strain>
        <strain>NOD</strain>
        <tissue>Brain</tissue>
        <tissue>Stomach</tissue>
        <tissue>Thymus</tissue>
    </source>
</reference>
<reference key="3">
    <citation type="journal article" date="2004" name="Genome Res.">
        <title>The status, quality, and expansion of the NIH full-length cDNA project: the Mammalian Gene Collection (MGC).</title>
        <authorList>
            <consortium name="The MGC Project Team"/>
        </authorList>
    </citation>
    <scope>NUCLEOTIDE SEQUENCE [LARGE SCALE MRNA]</scope>
    <source>
        <strain>C57BL/6J</strain>
        <tissue>Brain</tissue>
    </source>
</reference>
<reference key="4">
    <citation type="submission" date="2007-04" db="UniProtKB">
        <authorList>
            <person name="Lubec G."/>
            <person name="Kang S.U."/>
        </authorList>
    </citation>
    <scope>PROTEIN SEQUENCE OF 12-22; 60-70; 96-102; 106-117 AND 148-172</scope>
    <scope>IDENTIFICATION BY MASS SPECTROMETRY</scope>
    <source>
        <strain>C57BL/6J</strain>
        <tissue>Brain</tissue>
    </source>
</reference>
<reference key="5">
    <citation type="journal article" date="2007" name="Cell Metab.">
        <title>Rab10, a target of the AS160 Rab GAP, is required for insulin-stimulated translocation of GLUT4 to the adipocyte plasma membrane.</title>
        <authorList>
            <person name="Sano H."/>
            <person name="Eguez L."/>
            <person name="Teruel M.N."/>
            <person name="Fukuda M."/>
            <person name="Chuang T.D."/>
            <person name="Chavez J.A."/>
            <person name="Lienhard G.E."/>
            <person name="McGraw T.E."/>
        </authorList>
    </citation>
    <scope>FUNCTION IN GLUT4 TRANSPORT</scope>
    <scope>MUTAGENESIS OF GLN-68</scope>
</reference>
<reference key="6">
    <citation type="journal article" date="2009" name="Biochem. J.">
        <title>GDI-1 preferably interacts with Rab10 in insulin-stimulated GLUT4 translocation.</title>
        <authorList>
            <person name="Chen Y."/>
            <person name="Deng Y."/>
            <person name="Zhang J."/>
            <person name="Yang L."/>
            <person name="Xie X."/>
            <person name="Xu T."/>
        </authorList>
    </citation>
    <scope>INTERACTION WITH GDI1 AND GDI2</scope>
</reference>
<reference key="7">
    <citation type="journal article" date="2010" name="Am. J. Physiol.">
        <title>Rab10 associates with primary cilia and the exocyst complex in renal epithelial cells.</title>
        <authorList>
            <person name="Babbey C.M."/>
            <person name="Bacallao R.L."/>
            <person name="Dunn K.W."/>
        </authorList>
    </citation>
    <scope>SUBCELLULAR LOCATION</scope>
</reference>
<reference key="8">
    <citation type="journal article" date="2010" name="Cell">
        <title>A tissue-specific atlas of mouse protein phosphorylation and expression.</title>
        <authorList>
            <person name="Huttlin E.L."/>
            <person name="Jedrychowski M.P."/>
            <person name="Elias J.E."/>
            <person name="Goswami T."/>
            <person name="Rad R."/>
            <person name="Beausoleil S.A."/>
            <person name="Villen J."/>
            <person name="Haas W."/>
            <person name="Sowa M.E."/>
            <person name="Gygi S.P."/>
        </authorList>
    </citation>
    <scope>IDENTIFICATION BY MASS SPECTROMETRY [LARGE SCALE ANALYSIS]</scope>
    <source>
        <tissue>Brain</tissue>
        <tissue>Brown adipose tissue</tissue>
        <tissue>Heart</tissue>
        <tissue>Kidney</tissue>
        <tissue>Liver</tissue>
        <tissue>Lung</tissue>
        <tissue>Pancreas</tissue>
        <tissue>Spleen</tissue>
        <tissue>Testis</tissue>
    </source>
</reference>
<reference key="9">
    <citation type="journal article" date="2010" name="Proc. Natl. Acad. Sci. U.S.A.">
        <title>Ras-related protein Rab10 facilitates TLR4 signaling by promoting replenishment of TLR4 onto the plasma membrane.</title>
        <authorList>
            <person name="Wang D."/>
            <person name="Lou J."/>
            <person name="Ouyang C."/>
            <person name="Chen W."/>
            <person name="Liu Y."/>
            <person name="Liu X."/>
            <person name="Cao X."/>
            <person name="Wang J."/>
            <person name="Lu L."/>
        </authorList>
    </citation>
    <scope>FUNCTION IN TRANSPORT TO THE PLASMA MEMBRANE</scope>
    <scope>INDUCTION BY LPS</scope>
</reference>
<reference key="10">
    <citation type="journal article" date="2011" name="J. Biol. Chem.">
        <title>Insulin-stimulated GLUT4 protein translocation in adipocytes requires the Rab10 guanine nucleotide exchange factor Dennd4C.</title>
        <authorList>
            <person name="Sano H."/>
            <person name="Peck G.R."/>
            <person name="Kettenbach A.N."/>
            <person name="Gerber S.A."/>
            <person name="Lienhard G.E."/>
        </authorList>
    </citation>
    <scope>ACTIVITY REGULATION</scope>
</reference>
<reference key="11">
    <citation type="journal article" date="2012" name="J. Cell Biol.">
        <title>Rab10 and myosin-Va mediate insulin-stimulated GLUT4 storage vesicle translocation in adipocytes.</title>
        <authorList>
            <person name="Chen Y."/>
            <person name="Wang Y."/>
            <person name="Zhang J."/>
            <person name="Deng Y."/>
            <person name="Jiang L."/>
            <person name="Song E."/>
            <person name="Wu X.S."/>
            <person name="Hammer J.A."/>
            <person name="Xu T."/>
            <person name="Lippincott-Schwartz J."/>
        </authorList>
    </citation>
    <scope>FUNCTION</scope>
    <scope>INTERACTION WITH MYO5A</scope>
</reference>
<reference key="12">
    <citation type="journal article" date="2012" name="Traffic">
        <title>TBC1D13 is a RAB35 specific GAP that plays an important role in GLUT4 trafficking in adipocytes.</title>
        <authorList>
            <person name="Davey J.R."/>
            <person name="Humphrey S.J."/>
            <person name="Junutula J.R."/>
            <person name="Mishra A.K."/>
            <person name="Lambright D.G."/>
            <person name="James D.E."/>
            <person name="Stoeckli J."/>
        </authorList>
    </citation>
    <scope>INTERACTION WITH TBC1D13</scope>
</reference>
<reference key="13">
    <citation type="journal article" date="2016" name="Elife">
        <title>Phosphoproteomics reveals that Parkinson's disease kinase LRRK2 regulates a subset of Rab GTPases.</title>
        <authorList>
            <person name="Steger M."/>
            <person name="Tonelli F."/>
            <person name="Ito G."/>
            <person name="Davies P."/>
            <person name="Trost M."/>
            <person name="Vetter M."/>
            <person name="Wachter S."/>
            <person name="Lorentzen E."/>
            <person name="Duddy G."/>
            <person name="Wilson S."/>
            <person name="Baptista M.A."/>
            <person name="Fiske B.K."/>
            <person name="Fell M.J."/>
            <person name="Morrow J.A."/>
            <person name="Reith A.D."/>
            <person name="Alessi D.R."/>
            <person name="Mann M."/>
        </authorList>
    </citation>
    <scope>PHOSPHORYLATION AT THR-73</scope>
</reference>
<reference key="14">
    <citation type="journal article" date="2016" name="J. Cell Biol.">
        <title>SEC16A is a RAB10 effector required for insulin-stimulated GLUT4 trafficking in adipocytes.</title>
        <authorList>
            <person name="Bruno J."/>
            <person name="Brumfield A."/>
            <person name="Chaudhary N."/>
            <person name="Iaea D."/>
            <person name="McGraw T.E."/>
        </authorList>
    </citation>
    <scope>FUNCTION</scope>
    <scope>SUBCELLULAR LOCATION</scope>
    <scope>INTERACTION WITH SEC16A</scope>
</reference>
<reference key="15">
    <citation type="journal article" date="2017" name="Elife">
        <title>Systematic proteomic analysis of LRRK2-mediated Rab GTPase phosphorylation establishes a connection to ciliogenesis.</title>
        <authorList>
            <person name="Steger M."/>
            <person name="Diez F."/>
            <person name="Dhekne H.S."/>
            <person name="Lis P."/>
            <person name="Nirujogi R.S."/>
            <person name="Karayel O."/>
            <person name="Tonelli F."/>
            <person name="Martinez T.N."/>
            <person name="Lorentzen E."/>
            <person name="Pfeffer S.R."/>
            <person name="Alessi D.R."/>
            <person name="Mann M."/>
        </authorList>
    </citation>
    <scope>PHOSPHORYLATION AT THR-73</scope>
</reference>
<reference key="16">
    <citation type="journal article" date="2018" name="Elife">
        <title>A pathway for Parkinson's Disease LRRK2 kinase to block primary cilia and Sonic hedgehog signaling in the brain.</title>
        <authorList>
            <person name="Dhekne H.S."/>
            <person name="Yanatori I."/>
            <person name="Gomez R.C."/>
            <person name="Tonelli F."/>
            <person name="Diez F."/>
            <person name="Schuele B."/>
            <person name="Steger M."/>
            <person name="Alessi D.R."/>
            <person name="Pfeffer S.R."/>
        </authorList>
    </citation>
    <scope>SUBCELLULAR LOCATION</scope>
    <scope>TISSUE SPECIFICITY</scope>
</reference>
<reference evidence="18" key="17">
    <citation type="journal article" date="2018" name="Proc. Natl. Acad. Sci. U.S.A.">
        <title>LRRK2 and its substrate Rab GTPases are sequentially targeted onto stressed lysosomes and maintain their homeostasis.</title>
        <authorList>
            <person name="Eguchi T."/>
            <person name="Kuwahara T."/>
            <person name="Sakurai M."/>
            <person name="Komori T."/>
            <person name="Fujimoto T."/>
            <person name="Ito G."/>
            <person name="Yoshimura S.I."/>
            <person name="Harada A."/>
            <person name="Fukuda M."/>
            <person name="Koike M."/>
            <person name="Iwatsubo T."/>
        </authorList>
    </citation>
    <scope>FUNCTION</scope>
    <scope>SUBCELLULAR LOCATION</scope>
    <scope>PHOSPHORYLATION AT THR-73</scope>
</reference>
<keyword id="KW-0007">Acetylation</keyword>
<keyword id="KW-0966">Cell projection</keyword>
<keyword id="KW-0963">Cytoplasm</keyword>
<keyword id="KW-0968">Cytoplasmic vesicle</keyword>
<keyword id="KW-0206">Cytoskeleton</keyword>
<keyword id="KW-0903">Direct protein sequencing</keyword>
<keyword id="KW-0256">Endoplasmic reticulum</keyword>
<keyword id="KW-0967">Endosome</keyword>
<keyword id="KW-0333">Golgi apparatus</keyword>
<keyword id="KW-0342">GTP-binding</keyword>
<keyword id="KW-0378">Hydrolase</keyword>
<keyword id="KW-1017">Isopeptide bond</keyword>
<keyword id="KW-0449">Lipoprotein</keyword>
<keyword id="KW-0458">Lysosome</keyword>
<keyword id="KW-0460">Magnesium</keyword>
<keyword id="KW-0472">Membrane</keyword>
<keyword id="KW-0479">Metal-binding</keyword>
<keyword id="KW-0547">Nucleotide-binding</keyword>
<keyword id="KW-0597">Phosphoprotein</keyword>
<keyword id="KW-0636">Prenylation</keyword>
<keyword id="KW-0653">Protein transport</keyword>
<keyword id="KW-1185">Reference proteome</keyword>
<keyword id="KW-0813">Transport</keyword>
<keyword id="KW-0832">Ubl conjugation</keyword>
<feature type="chain" id="PRO_0000121147" description="Ras-related protein Rab-10">
    <location>
        <begin position="1"/>
        <end position="200"/>
    </location>
</feature>
<feature type="short sequence motif" description="Switch 1" evidence="5">
    <location>
        <begin position="32"/>
        <end position="46"/>
    </location>
</feature>
<feature type="short sequence motif" description="Switch 2" evidence="5">
    <location>
        <begin position="64"/>
        <end position="81"/>
    </location>
</feature>
<feature type="binding site" evidence="4">
    <location>
        <position position="18"/>
    </location>
    <ligand>
        <name>GTP</name>
        <dbReference type="ChEBI" id="CHEBI:37565"/>
    </ligand>
</feature>
<feature type="binding site" evidence="4">
    <location>
        <position position="19"/>
    </location>
    <ligand>
        <name>GTP</name>
        <dbReference type="ChEBI" id="CHEBI:37565"/>
    </ligand>
</feature>
<feature type="binding site" evidence="4">
    <location>
        <position position="20"/>
    </location>
    <ligand>
        <name>GTP</name>
        <dbReference type="ChEBI" id="CHEBI:37565"/>
    </ligand>
</feature>
<feature type="binding site" evidence="4">
    <location>
        <position position="21"/>
    </location>
    <ligand>
        <name>GTP</name>
        <dbReference type="ChEBI" id="CHEBI:37565"/>
    </ligand>
</feature>
<feature type="binding site" evidence="4">
    <location>
        <position position="22"/>
    </location>
    <ligand>
        <name>GTP</name>
        <dbReference type="ChEBI" id="CHEBI:37565"/>
    </ligand>
</feature>
<feature type="binding site" evidence="4">
    <location>
        <position position="23"/>
    </location>
    <ligand>
        <name>GTP</name>
        <dbReference type="ChEBI" id="CHEBI:37565"/>
    </ligand>
</feature>
<feature type="binding site" evidence="4">
    <location>
        <position position="23"/>
    </location>
    <ligand>
        <name>Mg(2+)</name>
        <dbReference type="ChEBI" id="CHEBI:18420"/>
    </ligand>
</feature>
<feature type="binding site" evidence="4">
    <location>
        <position position="24"/>
    </location>
    <ligand>
        <name>GTP</name>
        <dbReference type="ChEBI" id="CHEBI:37565"/>
    </ligand>
</feature>
<feature type="binding site" evidence="4">
    <location>
        <position position="35"/>
    </location>
    <ligand>
        <name>GTP</name>
        <dbReference type="ChEBI" id="CHEBI:37565"/>
    </ligand>
</feature>
<feature type="binding site" evidence="4">
    <location>
        <position position="36"/>
    </location>
    <ligand>
        <name>GTP</name>
        <dbReference type="ChEBI" id="CHEBI:37565"/>
    </ligand>
</feature>
<feature type="binding site" evidence="4">
    <location>
        <position position="40"/>
    </location>
    <ligand>
        <name>GTP</name>
        <dbReference type="ChEBI" id="CHEBI:37565"/>
    </ligand>
</feature>
<feature type="binding site" evidence="4">
    <location>
        <position position="41"/>
    </location>
    <ligand>
        <name>GTP</name>
        <dbReference type="ChEBI" id="CHEBI:37565"/>
    </ligand>
</feature>
<feature type="binding site" evidence="4">
    <location>
        <position position="41"/>
    </location>
    <ligand>
        <name>Mg(2+)</name>
        <dbReference type="ChEBI" id="CHEBI:18420"/>
    </ligand>
</feature>
<feature type="binding site" evidence="4">
    <location>
        <position position="64"/>
    </location>
    <ligand>
        <name>Mg(2+)</name>
        <dbReference type="ChEBI" id="CHEBI:18420"/>
    </ligand>
</feature>
<feature type="binding site" evidence="4">
    <location>
        <position position="67"/>
    </location>
    <ligand>
        <name>GTP</name>
        <dbReference type="ChEBI" id="CHEBI:37565"/>
    </ligand>
</feature>
<feature type="binding site" evidence="4">
    <location>
        <position position="122"/>
    </location>
    <ligand>
        <name>GTP</name>
        <dbReference type="ChEBI" id="CHEBI:37565"/>
    </ligand>
</feature>
<feature type="binding site" evidence="4">
    <location>
        <position position="123"/>
    </location>
    <ligand>
        <name>GTP</name>
        <dbReference type="ChEBI" id="CHEBI:37565"/>
    </ligand>
</feature>
<feature type="binding site" evidence="4">
    <location>
        <position position="125"/>
    </location>
    <ligand>
        <name>GTP</name>
        <dbReference type="ChEBI" id="CHEBI:37565"/>
    </ligand>
</feature>
<feature type="binding site" evidence="4">
    <location>
        <position position="126"/>
    </location>
    <ligand>
        <name>GTP</name>
        <dbReference type="ChEBI" id="CHEBI:37565"/>
    </ligand>
</feature>
<feature type="binding site" evidence="4">
    <location>
        <position position="152"/>
    </location>
    <ligand>
        <name>GTP</name>
        <dbReference type="ChEBI" id="CHEBI:37565"/>
    </ligand>
</feature>
<feature type="binding site" evidence="4">
    <location>
        <position position="153"/>
    </location>
    <ligand>
        <name>GTP</name>
        <dbReference type="ChEBI" id="CHEBI:37565"/>
    </ligand>
</feature>
<feature type="binding site" evidence="4">
    <location>
        <position position="154"/>
    </location>
    <ligand>
        <name>GTP</name>
        <dbReference type="ChEBI" id="CHEBI:37565"/>
    </ligand>
</feature>
<feature type="modified residue" description="Phosphothreonine; by LRRK2" evidence="13 15 16">
    <location>
        <position position="73"/>
    </location>
</feature>
<feature type="modified residue" description="N6-acetyllysine" evidence="4">
    <location>
        <position position="102"/>
    </location>
</feature>
<feature type="lipid moiety-binding region" description="S-geranylgeranyl cysteine" evidence="1">
    <location>
        <position position="199"/>
    </location>
</feature>
<feature type="lipid moiety-binding region" description="S-geranylgeranyl cysteine" evidence="1">
    <location>
        <position position="200"/>
    </location>
</feature>
<feature type="cross-link" description="Glycyl lysine isopeptide (Lys-Gly) (interchain with G-Cter in ubiquitin)" evidence="4">
    <location>
        <position position="102"/>
    </location>
</feature>
<feature type="cross-link" description="Glycyl lysine isopeptide (Lys-Gly) (interchain with G-Cter in ubiquitin)" evidence="4">
    <location>
        <position position="136"/>
    </location>
</feature>
<feature type="cross-link" description="Glycyl lysine isopeptide (Lys-Gly) (interchain with G-Cter in ubiquitin)" evidence="4">
    <location>
        <position position="154"/>
    </location>
</feature>
<feature type="mutagenesis site" description="Probable constitutively active mutant unable to hydrolyze GTP; stimulates translocation of SLC2A4 to the plasma membrane." evidence="6">
    <original>Q</original>
    <variation>L</variation>
    <location>
        <position position="68"/>
    </location>
</feature>
<feature type="sequence conflict" description="In Ref. 2; BAB25858." evidence="18" ref="2">
    <original>N</original>
    <variation>H</variation>
    <location>
        <position position="106"/>
    </location>
</feature>
<proteinExistence type="evidence at protein level"/>
<gene>
    <name evidence="20" type="primary">Rab10</name>
</gene>
<sequence length="200" mass="22541">MAKKTYDLLFKLLLIGDSGVGKTCVLFRFSDDAFNTTFISTIGIDFKIKTVELQGKKIKLQIWDTAGQERFHTITTSYYRGAMGIMLVYDITNGKSFENISKWLRNIDEHANEDVERMLLGNKCDMDDKRVVPKGKGEQIAREHGIRFFETSAKANINIEKAFLTLAEDILRKTPVKEPNSENVDISSGGGVTGWKSKCC</sequence>
<dbReference type="EC" id="3.6.5.2" evidence="4"/>
<dbReference type="EMBL" id="AF035646">
    <property type="protein sequence ID" value="AAC29313.1"/>
    <property type="molecule type" value="mRNA"/>
</dbReference>
<dbReference type="EMBL" id="AK008725">
    <property type="protein sequence ID" value="BAB25858.1"/>
    <property type="molecule type" value="mRNA"/>
</dbReference>
<dbReference type="EMBL" id="AK028320">
    <property type="protein sequence ID" value="BAC25878.1"/>
    <property type="molecule type" value="mRNA"/>
</dbReference>
<dbReference type="EMBL" id="AK087964">
    <property type="protein sequence ID" value="BAC40062.1"/>
    <property type="molecule type" value="mRNA"/>
</dbReference>
<dbReference type="EMBL" id="BC056374">
    <property type="protein sequence ID" value="AAH56374.1"/>
    <property type="molecule type" value="mRNA"/>
</dbReference>
<dbReference type="CCDS" id="CCDS25782.1"/>
<dbReference type="RefSeq" id="NP_057885.1">
    <property type="nucleotide sequence ID" value="NM_016676.5"/>
</dbReference>
<dbReference type="SMR" id="P61027"/>
<dbReference type="BioGRID" id="202531">
    <property type="interactions" value="20"/>
</dbReference>
<dbReference type="DIP" id="DIP-37720N"/>
<dbReference type="FunCoup" id="P61027">
    <property type="interactions" value="3285"/>
</dbReference>
<dbReference type="IntAct" id="P61027">
    <property type="interactions" value="24"/>
</dbReference>
<dbReference type="MINT" id="P61027"/>
<dbReference type="STRING" id="10090.ENSMUSP00000021001"/>
<dbReference type="GlyGen" id="P61027">
    <property type="glycosylation" value="1 site, 1 O-linked glycan (1 site)"/>
</dbReference>
<dbReference type="iPTMnet" id="P61027"/>
<dbReference type="PhosphoSitePlus" id="P61027"/>
<dbReference type="SwissPalm" id="P61027"/>
<dbReference type="jPOST" id="P61027"/>
<dbReference type="PaxDb" id="10090-ENSMUSP00000021001"/>
<dbReference type="PeptideAtlas" id="P61027"/>
<dbReference type="ProteomicsDB" id="300371"/>
<dbReference type="Pumba" id="P61027"/>
<dbReference type="Antibodypedia" id="27788">
    <property type="antibodies" value="246 antibodies from 33 providers"/>
</dbReference>
<dbReference type="DNASU" id="19325"/>
<dbReference type="Ensembl" id="ENSMUST00000021001.10">
    <property type="protein sequence ID" value="ENSMUSP00000021001.9"/>
    <property type="gene ID" value="ENSMUSG00000020671.10"/>
</dbReference>
<dbReference type="GeneID" id="19325"/>
<dbReference type="KEGG" id="mmu:19325"/>
<dbReference type="UCSC" id="uc007mwl.2">
    <property type="organism name" value="mouse"/>
</dbReference>
<dbReference type="AGR" id="MGI:105066"/>
<dbReference type="CTD" id="10890"/>
<dbReference type="MGI" id="MGI:105066">
    <property type="gene designation" value="Rab10"/>
</dbReference>
<dbReference type="VEuPathDB" id="HostDB:ENSMUSG00000020671"/>
<dbReference type="eggNOG" id="KOG0078">
    <property type="taxonomic scope" value="Eukaryota"/>
</dbReference>
<dbReference type="GeneTree" id="ENSGT00940000156975"/>
<dbReference type="HOGENOM" id="CLU_041217_23_1_1"/>
<dbReference type="InParanoid" id="P61027"/>
<dbReference type="OMA" id="ENIRTWF"/>
<dbReference type="OrthoDB" id="9989112at2759"/>
<dbReference type="PhylomeDB" id="P61027"/>
<dbReference type="TreeFam" id="TF314097"/>
<dbReference type="Reactome" id="R-MMU-6798695">
    <property type="pathway name" value="Neutrophil degranulation"/>
</dbReference>
<dbReference type="Reactome" id="R-MMU-8873719">
    <property type="pathway name" value="RAB geranylgeranylation"/>
</dbReference>
<dbReference type="Reactome" id="R-MMU-8876198">
    <property type="pathway name" value="RAB GEFs exchange GTP for GDP on RABs"/>
</dbReference>
<dbReference type="BioGRID-ORCS" id="19325">
    <property type="hits" value="10 hits in 79 CRISPR screens"/>
</dbReference>
<dbReference type="CD-CODE" id="CE726F99">
    <property type="entry name" value="Postsynaptic density"/>
</dbReference>
<dbReference type="ChiTaRS" id="Rab10">
    <property type="organism name" value="mouse"/>
</dbReference>
<dbReference type="PRO" id="PR:P61027"/>
<dbReference type="Proteomes" id="UP000000589">
    <property type="component" value="Chromosome 12"/>
</dbReference>
<dbReference type="RNAct" id="P61027">
    <property type="molecule type" value="protein"/>
</dbReference>
<dbReference type="Bgee" id="ENSMUSG00000020671">
    <property type="expression patterns" value="Expressed in vastus lateralis and 257 other cell types or tissues"/>
</dbReference>
<dbReference type="ExpressionAtlas" id="P61027">
    <property type="expression patterns" value="baseline and differential"/>
</dbReference>
<dbReference type="GO" id="GO:0005929">
    <property type="term" value="C:cilium"/>
    <property type="evidence" value="ECO:0000314"/>
    <property type="project" value="UniProtKB"/>
</dbReference>
<dbReference type="GO" id="GO:0030659">
    <property type="term" value="C:cytoplasmic vesicle membrane"/>
    <property type="evidence" value="ECO:0000304"/>
    <property type="project" value="Reactome"/>
</dbReference>
<dbReference type="GO" id="GO:0005856">
    <property type="term" value="C:cytoskeleton"/>
    <property type="evidence" value="ECO:0007669"/>
    <property type="project" value="UniProtKB-KW"/>
</dbReference>
<dbReference type="GO" id="GO:0005789">
    <property type="term" value="C:endoplasmic reticulum membrane"/>
    <property type="evidence" value="ECO:0000250"/>
    <property type="project" value="UniProtKB"/>
</dbReference>
<dbReference type="GO" id="GO:0071782">
    <property type="term" value="C:endoplasmic reticulum tubular network"/>
    <property type="evidence" value="ECO:0000250"/>
    <property type="project" value="UniProtKB"/>
</dbReference>
<dbReference type="GO" id="GO:0005768">
    <property type="term" value="C:endosome"/>
    <property type="evidence" value="ECO:0000250"/>
    <property type="project" value="UniProtKB"/>
</dbReference>
<dbReference type="GO" id="GO:0010008">
    <property type="term" value="C:endosome membrane"/>
    <property type="evidence" value="ECO:0000250"/>
    <property type="project" value="UniProtKB"/>
</dbReference>
<dbReference type="GO" id="GO:0070382">
    <property type="term" value="C:exocytic vesicle"/>
    <property type="evidence" value="ECO:0007669"/>
    <property type="project" value="Ensembl"/>
</dbReference>
<dbReference type="GO" id="GO:0005794">
    <property type="term" value="C:Golgi apparatus"/>
    <property type="evidence" value="ECO:0000314"/>
    <property type="project" value="MGI"/>
</dbReference>
<dbReference type="GO" id="GO:0032593">
    <property type="term" value="C:insulin-responsive compartment"/>
    <property type="evidence" value="ECO:0000250"/>
    <property type="project" value="UniProtKB"/>
</dbReference>
<dbReference type="GO" id="GO:0005764">
    <property type="term" value="C:lysosome"/>
    <property type="evidence" value="ECO:0007669"/>
    <property type="project" value="UniProtKB-SubCell"/>
</dbReference>
<dbReference type="GO" id="GO:0048471">
    <property type="term" value="C:perinuclear region of cytoplasm"/>
    <property type="evidence" value="ECO:0000314"/>
    <property type="project" value="UniProtKB"/>
</dbReference>
<dbReference type="GO" id="GO:0030670">
    <property type="term" value="C:phagocytic vesicle membrane"/>
    <property type="evidence" value="ECO:0007669"/>
    <property type="project" value="UniProtKB-SubCell"/>
</dbReference>
<dbReference type="GO" id="GO:0005886">
    <property type="term" value="C:plasma membrane"/>
    <property type="evidence" value="ECO:0007669"/>
    <property type="project" value="Ensembl"/>
</dbReference>
<dbReference type="GO" id="GO:0055037">
    <property type="term" value="C:recycling endosome"/>
    <property type="evidence" value="ECO:0000250"/>
    <property type="project" value="UniProtKB"/>
</dbReference>
<dbReference type="GO" id="GO:0055038">
    <property type="term" value="C:recycling endosome membrane"/>
    <property type="evidence" value="ECO:0007669"/>
    <property type="project" value="UniProtKB-SubCell"/>
</dbReference>
<dbReference type="GO" id="GO:0005802">
    <property type="term" value="C:trans-Golgi network"/>
    <property type="evidence" value="ECO:0000250"/>
    <property type="project" value="UniProtKB"/>
</dbReference>
<dbReference type="GO" id="GO:0003925">
    <property type="term" value="F:G protein activity"/>
    <property type="evidence" value="ECO:0007669"/>
    <property type="project" value="UniProtKB-EC"/>
</dbReference>
<dbReference type="GO" id="GO:0019003">
    <property type="term" value="F:GDP binding"/>
    <property type="evidence" value="ECO:0000250"/>
    <property type="project" value="UniProtKB"/>
</dbReference>
<dbReference type="GO" id="GO:0005525">
    <property type="term" value="F:GTP binding"/>
    <property type="evidence" value="ECO:0000250"/>
    <property type="project" value="UniProtKB"/>
</dbReference>
<dbReference type="GO" id="GO:0003924">
    <property type="term" value="F:GTPase activity"/>
    <property type="evidence" value="ECO:0000304"/>
    <property type="project" value="Reactome"/>
</dbReference>
<dbReference type="GO" id="GO:0031489">
    <property type="term" value="F:myosin V binding"/>
    <property type="evidence" value="ECO:0007669"/>
    <property type="project" value="Ensembl"/>
</dbReference>
<dbReference type="GO" id="GO:0019882">
    <property type="term" value="P:antigen processing and presentation"/>
    <property type="evidence" value="ECO:0007669"/>
    <property type="project" value="Ensembl"/>
</dbReference>
<dbReference type="GO" id="GO:0007409">
    <property type="term" value="P:axonogenesis"/>
    <property type="evidence" value="ECO:0000250"/>
    <property type="project" value="UniProtKB"/>
</dbReference>
<dbReference type="GO" id="GO:0032869">
    <property type="term" value="P:cellular response to insulin stimulus"/>
    <property type="evidence" value="ECO:0000315"/>
    <property type="project" value="UniProtKB"/>
</dbReference>
<dbReference type="GO" id="GO:0071786">
    <property type="term" value="P:endoplasmic reticulum tubular network organization"/>
    <property type="evidence" value="ECO:0000250"/>
    <property type="project" value="UniProtKB"/>
</dbReference>
<dbReference type="GO" id="GO:0016197">
    <property type="term" value="P:endosomal transport"/>
    <property type="evidence" value="ECO:0000250"/>
    <property type="project" value="UniProtKB"/>
</dbReference>
<dbReference type="GO" id="GO:0045200">
    <property type="term" value="P:establishment of neuroblast polarity"/>
    <property type="evidence" value="ECO:0000250"/>
    <property type="project" value="UniProtKB"/>
</dbReference>
<dbReference type="GO" id="GO:0097051">
    <property type="term" value="P:establishment of protein localization to endoplasmic reticulum membrane"/>
    <property type="evidence" value="ECO:0000250"/>
    <property type="project" value="UniProtKB"/>
</dbReference>
<dbReference type="GO" id="GO:0043001">
    <property type="term" value="P:Golgi to plasma membrane protein transport"/>
    <property type="evidence" value="ECO:0000250"/>
    <property type="project" value="UniProtKB"/>
</dbReference>
<dbReference type="GO" id="GO:0006893">
    <property type="term" value="P:Golgi to plasma membrane transport"/>
    <property type="evidence" value="ECO:0000250"/>
    <property type="project" value="UniProtKB"/>
</dbReference>
<dbReference type="GO" id="GO:0006886">
    <property type="term" value="P:intracellular protein transport"/>
    <property type="evidence" value="ECO:0000304"/>
    <property type="project" value="MGI"/>
</dbReference>
<dbReference type="GO" id="GO:0030859">
    <property type="term" value="P:polarized epithelial cell differentiation"/>
    <property type="evidence" value="ECO:0000250"/>
    <property type="project" value="UniProtKB"/>
</dbReference>
<dbReference type="GO" id="GO:1903361">
    <property type="term" value="P:protein localization to basolateral plasma membrane"/>
    <property type="evidence" value="ECO:0000250"/>
    <property type="project" value="UniProtKB"/>
</dbReference>
<dbReference type="GO" id="GO:0072659">
    <property type="term" value="P:protein localization to plasma membrane"/>
    <property type="evidence" value="ECO:0000315"/>
    <property type="project" value="UniProtKB"/>
</dbReference>
<dbReference type="GO" id="GO:0045055">
    <property type="term" value="P:regulated exocytosis"/>
    <property type="evidence" value="ECO:0007669"/>
    <property type="project" value="Ensembl"/>
</dbReference>
<dbReference type="GO" id="GO:0016192">
    <property type="term" value="P:vesicle-mediated transport"/>
    <property type="evidence" value="ECO:0000315"/>
    <property type="project" value="UniProtKB"/>
</dbReference>
<dbReference type="CDD" id="cd01867">
    <property type="entry name" value="Rab8_Rab10_Rab13_like"/>
    <property type="match status" value="1"/>
</dbReference>
<dbReference type="FunFam" id="3.40.50.300:FF:000202">
    <property type="entry name" value="ras-related protein Rab-8A"/>
    <property type="match status" value="1"/>
</dbReference>
<dbReference type="Gene3D" id="3.40.50.300">
    <property type="entry name" value="P-loop containing nucleotide triphosphate hydrolases"/>
    <property type="match status" value="1"/>
</dbReference>
<dbReference type="InterPro" id="IPR027417">
    <property type="entry name" value="P-loop_NTPase"/>
</dbReference>
<dbReference type="InterPro" id="IPR005225">
    <property type="entry name" value="Small_GTP-bd"/>
</dbReference>
<dbReference type="InterPro" id="IPR001806">
    <property type="entry name" value="Small_GTPase"/>
</dbReference>
<dbReference type="InterPro" id="IPR050305">
    <property type="entry name" value="Small_GTPase_Rab"/>
</dbReference>
<dbReference type="NCBIfam" id="TIGR00231">
    <property type="entry name" value="small_GTP"/>
    <property type="match status" value="1"/>
</dbReference>
<dbReference type="PANTHER" id="PTHR47980">
    <property type="entry name" value="LD44762P"/>
    <property type="match status" value="1"/>
</dbReference>
<dbReference type="Pfam" id="PF00071">
    <property type="entry name" value="Ras"/>
    <property type="match status" value="1"/>
</dbReference>
<dbReference type="PRINTS" id="PR00449">
    <property type="entry name" value="RASTRNSFRMNG"/>
</dbReference>
<dbReference type="SMART" id="SM00177">
    <property type="entry name" value="ARF"/>
    <property type="match status" value="1"/>
</dbReference>
<dbReference type="SMART" id="SM00175">
    <property type="entry name" value="RAB"/>
    <property type="match status" value="1"/>
</dbReference>
<dbReference type="SMART" id="SM00176">
    <property type="entry name" value="RAN"/>
    <property type="match status" value="1"/>
</dbReference>
<dbReference type="SMART" id="SM00173">
    <property type="entry name" value="RAS"/>
    <property type="match status" value="1"/>
</dbReference>
<dbReference type="SMART" id="SM00174">
    <property type="entry name" value="RHO"/>
    <property type="match status" value="1"/>
</dbReference>
<dbReference type="SUPFAM" id="SSF52540">
    <property type="entry name" value="P-loop containing nucleoside triphosphate hydrolases"/>
    <property type="match status" value="1"/>
</dbReference>
<dbReference type="PROSITE" id="PS51419">
    <property type="entry name" value="RAB"/>
    <property type="match status" value="1"/>
</dbReference>